<gene>
    <name type="primary">MSTN</name>
    <name type="synonym">GDF8</name>
</gene>
<evidence type="ECO:0000250" key="1">
    <source>
        <dbReference type="UniProtKB" id="O08689"/>
    </source>
</evidence>
<evidence type="ECO:0000250" key="2">
    <source>
        <dbReference type="UniProtKB" id="O14793"/>
    </source>
</evidence>
<evidence type="ECO:0000255" key="3"/>
<evidence type="ECO:0000305" key="4"/>
<reference key="1">
    <citation type="submission" date="2003-10" db="EMBL/GenBank/DDBJ databases">
        <title>siRNA knock down of goat myostatin.</title>
        <authorList>
            <person name="Golding M.C."/>
            <person name="Long C.R."/>
            <person name="Westhusin M.E."/>
        </authorList>
    </citation>
    <scope>NUCLEOTIDE SEQUENCE [MRNA]</scope>
</reference>
<reference key="2">
    <citation type="submission" date="2005-09" db="EMBL/GenBank/DDBJ databases">
        <title>Cloning and expression of the goat myostatin gene.</title>
        <authorList>
            <person name="Liu Z.Z."/>
            <person name="Li X.L."/>
            <person name="Gong Y.F."/>
        </authorList>
    </citation>
    <scope>NUCLEOTIDE SEQUENCE [GENOMIC DNA]</scope>
    <source>
        <tissue>Blood</tissue>
    </source>
</reference>
<sequence length="375" mass="42827">MQKLQIFVYIYLFMLLVAGPVDLNENSEQKENVEKKGLCNACLWRQNNKSSRLEAIKIQILSKLRLETAPNISKDAIRQLLPKAPPLRELIDQYDVQRDDSSDGSLEDDDYHVTTETVITMPTESDLLAEVQEKPKCCFFKFSSKIQHNKVVKAQLWIYLRPVKTPTTVFVQILRLIKPMKDGTRYTGIRSLKLDMNPGTGIWQSIDVKTVLQNWLKQPESNLGIEIKALDENGHDLAVTFPEPGEEGLNPFLEVKVTDTPKRSRRDFGLDCDEHSTESRCCRYPLTVDFEAFGWDWIIAPKRYKANYCSGECEFLFLQKYPHTHLVHQANPKGSAGPCCTPTKMSPINMLYFNGKEQIIYGKIPGMVVDRCGCS</sequence>
<organism>
    <name type="scientific">Capra hircus</name>
    <name type="common">Goat</name>
    <dbReference type="NCBI Taxonomy" id="9925"/>
    <lineage>
        <taxon>Eukaryota</taxon>
        <taxon>Metazoa</taxon>
        <taxon>Chordata</taxon>
        <taxon>Craniata</taxon>
        <taxon>Vertebrata</taxon>
        <taxon>Euteleostomi</taxon>
        <taxon>Mammalia</taxon>
        <taxon>Eutheria</taxon>
        <taxon>Laurasiatheria</taxon>
        <taxon>Artiodactyla</taxon>
        <taxon>Ruminantia</taxon>
        <taxon>Pecora</taxon>
        <taxon>Bovidae</taxon>
        <taxon>Caprinae</taxon>
        <taxon>Capra</taxon>
    </lineage>
</organism>
<proteinExistence type="evidence at transcript level"/>
<protein>
    <recommendedName>
        <fullName>Growth/differentiation factor 8</fullName>
        <shortName>GDF-8</shortName>
    </recommendedName>
    <alternativeName>
        <fullName>Myostatin</fullName>
    </alternativeName>
</protein>
<feature type="signal peptide" evidence="3">
    <location>
        <begin position="1"/>
        <end position="18"/>
    </location>
</feature>
<feature type="propeptide" id="PRO_0000033944" evidence="3">
    <location>
        <begin position="19"/>
        <end position="266"/>
    </location>
</feature>
<feature type="chain" id="PRO_0000033945" description="Growth/differentiation factor 8">
    <location>
        <begin position="267"/>
        <end position="375"/>
    </location>
</feature>
<feature type="site" description="Cleavage" evidence="1">
    <location>
        <begin position="98"/>
        <end position="99"/>
    </location>
</feature>
<feature type="glycosylation site" description="N-linked (GlcNAc...) asparagine" evidence="3">
    <location>
        <position position="48"/>
    </location>
</feature>
<feature type="glycosylation site" description="N-linked (GlcNAc...) asparagine" evidence="3">
    <location>
        <position position="71"/>
    </location>
</feature>
<feature type="disulfide bond" evidence="2">
    <location>
        <begin position="272"/>
        <end position="282"/>
    </location>
</feature>
<feature type="disulfide bond" evidence="2">
    <location>
        <begin position="281"/>
        <end position="340"/>
    </location>
</feature>
<feature type="disulfide bond" evidence="2">
    <location>
        <begin position="309"/>
        <end position="372"/>
    </location>
</feature>
<feature type="disulfide bond" evidence="2">
    <location>
        <begin position="313"/>
        <end position="374"/>
    </location>
</feature>
<feature type="disulfide bond" description="Interchain" evidence="2">
    <location>
        <position position="339"/>
    </location>
</feature>
<feature type="sequence conflict" description="In Ref. 1; AAR12161." evidence="4" ref="1">
    <original>F</original>
    <variation>S</variation>
    <location>
        <position position="7"/>
    </location>
</feature>
<feature type="sequence conflict" description="In Ref. 1; AAR12161." evidence="4" ref="1">
    <original>L</original>
    <variation>I</variation>
    <location>
        <position position="16"/>
    </location>
</feature>
<feature type="sequence conflict" description="In Ref. 1; AAR12161." evidence="4" ref="1">
    <original>Q</original>
    <variation>H</variation>
    <location>
        <position position="29"/>
    </location>
</feature>
<feature type="sequence conflict" description="In Ref. 1; AAR12161." evidence="4" ref="1">
    <original>D</original>
    <variation>A</variation>
    <location>
        <position position="195"/>
    </location>
</feature>
<feature type="sequence conflict" description="In Ref. 1; AAR12161." evidence="4" ref="1">
    <original>F</original>
    <variation>V</variation>
    <location>
        <position position="293"/>
    </location>
</feature>
<keyword id="KW-0165">Cleavage on pair of basic residues</keyword>
<keyword id="KW-0202">Cytokine</keyword>
<keyword id="KW-1015">Disulfide bond</keyword>
<keyword id="KW-0325">Glycoprotein</keyword>
<keyword id="KW-0339">Growth factor</keyword>
<keyword id="KW-0358">Heparin-binding</keyword>
<keyword id="KW-1185">Reference proteome</keyword>
<keyword id="KW-0964">Secreted</keyword>
<keyword id="KW-0732">Signal</keyword>
<comment type="function">
    <text evidence="1">Acts specifically as a negative regulator of skeletal muscle growth.</text>
</comment>
<comment type="subunit">
    <text evidence="1">Homodimer; disulfide-linked. Interacts with WFIKKN2, leading to inhibit its activity. Interacts with FSTL3.</text>
</comment>
<comment type="subcellular location">
    <subcellularLocation>
        <location evidence="1">Secreted</location>
    </subcellularLocation>
</comment>
<comment type="PTM">
    <text evidence="1">Synthesized as large precursor molecule that undergoes proteolytic cleavage to generate an N-terminal propeptide and a disulfide linked C-terminal dimer, which is the biologically active molecule. The circulating form consists of a latent complex of the C-terminal dimer and other proteins, including its propeptide, which maintain the C-terminal dimer in a latent, inactive state. Ligand activation requires additional cleavage of the prodomain by a tolloid-like metalloproteinase.</text>
</comment>
<comment type="similarity">
    <text evidence="4">Belongs to the TGF-beta family.</text>
</comment>
<accession>Q6T5B8</accession>
<accession>Q3S4A8</accession>
<name>GDF8_CAPHI</name>
<dbReference type="EMBL" id="AY436347">
    <property type="protein sequence ID" value="AAR12161.1"/>
    <property type="molecule type" value="mRNA"/>
</dbReference>
<dbReference type="EMBL" id="DQ167575">
    <property type="protein sequence ID" value="AAZ95183.2"/>
    <property type="molecule type" value="Genomic_DNA"/>
</dbReference>
<dbReference type="RefSeq" id="NP_001272666.1">
    <property type="nucleotide sequence ID" value="NM_001285737.1"/>
</dbReference>
<dbReference type="SMR" id="Q6T5B8"/>
<dbReference type="STRING" id="9925.ENSCHIP00000026815"/>
<dbReference type="GlyCosmos" id="Q6T5B8">
    <property type="glycosylation" value="2 sites, No reported glycans"/>
</dbReference>
<dbReference type="Ensembl" id="ENSCHIT00000034681.1">
    <property type="protein sequence ID" value="ENSCHIP00000026815.1"/>
    <property type="gene ID" value="ENSCHIG00000022964.1"/>
</dbReference>
<dbReference type="Ensembl" id="ENSCHIT00010041614.1">
    <property type="protein sequence ID" value="ENSCHIP00010029543.1"/>
    <property type="gene ID" value="ENSCHIG00010021974.1"/>
</dbReference>
<dbReference type="Ensembl" id="ENSCHIT00020039544">
    <property type="protein sequence ID" value="ENSCHIP00020029342"/>
    <property type="gene ID" value="ENSCHIG00020019075"/>
</dbReference>
<dbReference type="Ensembl" id="ENSCHIT00040032773">
    <property type="protein sequence ID" value="ENSCHIP00040025910"/>
    <property type="gene ID" value="ENSCHIG00040015051"/>
</dbReference>
<dbReference type="GeneID" id="100860887"/>
<dbReference type="KEGG" id="chx:100860887"/>
<dbReference type="CTD" id="2660"/>
<dbReference type="GeneTree" id="ENSGT00940000160657"/>
<dbReference type="OMA" id="CNACMWR"/>
<dbReference type="OrthoDB" id="5948587at2759"/>
<dbReference type="Proteomes" id="UP000291000">
    <property type="component" value="Chromosome 2"/>
</dbReference>
<dbReference type="Proteomes" id="UP000694566">
    <property type="component" value="Chromosome 2"/>
</dbReference>
<dbReference type="Bgee" id="ENSCHIG00000022964">
    <property type="expression patterns" value="Expressed in longissimus thoracis muscle and 7 other cell types or tissues"/>
</dbReference>
<dbReference type="GO" id="GO:0005615">
    <property type="term" value="C:extracellular space"/>
    <property type="evidence" value="ECO:0007669"/>
    <property type="project" value="UniProtKB-KW"/>
</dbReference>
<dbReference type="GO" id="GO:0005125">
    <property type="term" value="F:cytokine activity"/>
    <property type="evidence" value="ECO:0007669"/>
    <property type="project" value="UniProtKB-KW"/>
</dbReference>
<dbReference type="GO" id="GO:0008083">
    <property type="term" value="F:growth factor activity"/>
    <property type="evidence" value="ECO:0007669"/>
    <property type="project" value="UniProtKB-KW"/>
</dbReference>
<dbReference type="GO" id="GO:0008201">
    <property type="term" value="F:heparin binding"/>
    <property type="evidence" value="ECO:0007669"/>
    <property type="project" value="UniProtKB-KW"/>
</dbReference>
<dbReference type="GO" id="GO:0042802">
    <property type="term" value="F:identical protein binding"/>
    <property type="evidence" value="ECO:0000250"/>
    <property type="project" value="UniProtKB"/>
</dbReference>
<dbReference type="GO" id="GO:0042803">
    <property type="term" value="F:protein homodimerization activity"/>
    <property type="evidence" value="ECO:0007669"/>
    <property type="project" value="Ensembl"/>
</dbReference>
<dbReference type="GO" id="GO:0043539">
    <property type="term" value="F:protein serine/threonine kinase activator activity"/>
    <property type="evidence" value="ECO:0007669"/>
    <property type="project" value="Ensembl"/>
</dbReference>
<dbReference type="GO" id="GO:0071549">
    <property type="term" value="P:cellular response to dexamethasone stimulus"/>
    <property type="evidence" value="ECO:0007669"/>
    <property type="project" value="Ensembl"/>
</dbReference>
<dbReference type="GO" id="GO:0046716">
    <property type="term" value="P:muscle cell cellular homeostasis"/>
    <property type="evidence" value="ECO:0007669"/>
    <property type="project" value="Ensembl"/>
</dbReference>
<dbReference type="GO" id="GO:0014839">
    <property type="term" value="P:myoblast migration involved in skeletal muscle regeneration"/>
    <property type="evidence" value="ECO:0000250"/>
    <property type="project" value="UniProtKB"/>
</dbReference>
<dbReference type="GO" id="GO:0046627">
    <property type="term" value="P:negative regulation of insulin receptor signaling pathway"/>
    <property type="evidence" value="ECO:0007669"/>
    <property type="project" value="Ensembl"/>
</dbReference>
<dbReference type="GO" id="GO:0045662">
    <property type="term" value="P:negative regulation of myoblast differentiation"/>
    <property type="evidence" value="ECO:0007669"/>
    <property type="project" value="Ensembl"/>
</dbReference>
<dbReference type="GO" id="GO:0051898">
    <property type="term" value="P:negative regulation of phosphatidylinositol 3-kinase/protein kinase B signal transduction"/>
    <property type="evidence" value="ECO:0007669"/>
    <property type="project" value="Ensembl"/>
</dbReference>
<dbReference type="GO" id="GO:0048632">
    <property type="term" value="P:negative regulation of skeletal muscle tissue growth"/>
    <property type="evidence" value="ECO:0007669"/>
    <property type="project" value="Ensembl"/>
</dbReference>
<dbReference type="GO" id="GO:0045893">
    <property type="term" value="P:positive regulation of DNA-templated transcription"/>
    <property type="evidence" value="ECO:0007669"/>
    <property type="project" value="Ensembl"/>
</dbReference>
<dbReference type="GO" id="GO:0010592">
    <property type="term" value="P:positive regulation of lamellipodium assembly"/>
    <property type="evidence" value="ECO:0000250"/>
    <property type="project" value="UniProtKB"/>
</dbReference>
<dbReference type="GO" id="GO:0010759">
    <property type="term" value="P:positive regulation of macrophage chemotaxis"/>
    <property type="evidence" value="ECO:0000250"/>
    <property type="project" value="UniProtKB"/>
</dbReference>
<dbReference type="GO" id="GO:0014816">
    <property type="term" value="P:skeletal muscle satellite cell differentiation"/>
    <property type="evidence" value="ECO:0007669"/>
    <property type="project" value="Ensembl"/>
</dbReference>
<dbReference type="GO" id="GO:0007179">
    <property type="term" value="P:transforming growth factor beta receptor signaling pathway"/>
    <property type="evidence" value="ECO:0007669"/>
    <property type="project" value="Ensembl"/>
</dbReference>
<dbReference type="CDD" id="cd19388">
    <property type="entry name" value="TGF_beta_GDF8"/>
    <property type="match status" value="1"/>
</dbReference>
<dbReference type="FunFam" id="2.60.120.970:FF:000001">
    <property type="entry name" value="Growth/differentiation factor 8"/>
    <property type="match status" value="1"/>
</dbReference>
<dbReference type="FunFam" id="2.10.90.10:FF:000006">
    <property type="entry name" value="growth/differentiation factor 8"/>
    <property type="match status" value="1"/>
</dbReference>
<dbReference type="Gene3D" id="2.60.120.970">
    <property type="match status" value="1"/>
</dbReference>
<dbReference type="Gene3D" id="2.10.90.10">
    <property type="entry name" value="Cystine-knot cytokines"/>
    <property type="match status" value="1"/>
</dbReference>
<dbReference type="InterPro" id="IPR029034">
    <property type="entry name" value="Cystine-knot_cytokine"/>
</dbReference>
<dbReference type="InterPro" id="IPR001839">
    <property type="entry name" value="TGF-b_C"/>
</dbReference>
<dbReference type="InterPro" id="IPR001111">
    <property type="entry name" value="TGF-b_propeptide"/>
</dbReference>
<dbReference type="InterPro" id="IPR015615">
    <property type="entry name" value="TGF-beta-rel"/>
</dbReference>
<dbReference type="InterPro" id="IPR017948">
    <property type="entry name" value="TGFb_CS"/>
</dbReference>
<dbReference type="PANTHER" id="PTHR11848:SF150">
    <property type="entry name" value="GROWTH_DIFFERENTIATION FACTOR 8"/>
    <property type="match status" value="1"/>
</dbReference>
<dbReference type="PANTHER" id="PTHR11848">
    <property type="entry name" value="TGF-BETA FAMILY"/>
    <property type="match status" value="1"/>
</dbReference>
<dbReference type="Pfam" id="PF00019">
    <property type="entry name" value="TGF_beta"/>
    <property type="match status" value="1"/>
</dbReference>
<dbReference type="Pfam" id="PF00688">
    <property type="entry name" value="TGFb_propeptide"/>
    <property type="match status" value="1"/>
</dbReference>
<dbReference type="SMART" id="SM00204">
    <property type="entry name" value="TGFB"/>
    <property type="match status" value="1"/>
</dbReference>
<dbReference type="SUPFAM" id="SSF57501">
    <property type="entry name" value="Cystine-knot cytokines"/>
    <property type="match status" value="1"/>
</dbReference>
<dbReference type="PROSITE" id="PS00250">
    <property type="entry name" value="TGF_BETA_1"/>
    <property type="match status" value="1"/>
</dbReference>
<dbReference type="PROSITE" id="PS51362">
    <property type="entry name" value="TGF_BETA_2"/>
    <property type="match status" value="1"/>
</dbReference>